<evidence type="ECO:0000250" key="1"/>
<evidence type="ECO:0000255" key="2"/>
<evidence type="ECO:0000269" key="3">
    <source>
    </source>
</evidence>
<evidence type="ECO:0000269" key="4">
    <source>
    </source>
</evidence>
<evidence type="ECO:0000269" key="5">
    <source>
    </source>
</evidence>
<evidence type="ECO:0000269" key="6">
    <source>
    </source>
</evidence>
<evidence type="ECO:0000305" key="7"/>
<reference key="1">
    <citation type="journal article" date="1995" name="J. Biol. Chem.">
        <title>A SecY homolog in Arabidopsis thaliana. Sequence of a full-length cDNA clone and import of the precursor protein into chloroplasts.</title>
        <authorList>
            <person name="Laidler V."/>
            <person name="Chaddock A.M."/>
            <person name="Knott T.G."/>
            <person name="Walker D."/>
            <person name="Robinson C."/>
        </authorList>
    </citation>
    <scope>NUCLEOTIDE SEQUENCE [MRNA]</scope>
</reference>
<reference key="2">
    <citation type="journal article" date="1999" name="Nature">
        <title>Sequence and analysis of chromosome 2 of the plant Arabidopsis thaliana.</title>
        <authorList>
            <person name="Lin X."/>
            <person name="Kaul S."/>
            <person name="Rounsley S.D."/>
            <person name="Shea T.P."/>
            <person name="Benito M.-I."/>
            <person name="Town C.D."/>
            <person name="Fujii C.Y."/>
            <person name="Mason T.M."/>
            <person name="Bowman C.L."/>
            <person name="Barnstead M.E."/>
            <person name="Feldblyum T.V."/>
            <person name="Buell C.R."/>
            <person name="Ketchum K.A."/>
            <person name="Lee J.J."/>
            <person name="Ronning C.M."/>
            <person name="Koo H.L."/>
            <person name="Moffat K.S."/>
            <person name="Cronin L.A."/>
            <person name="Shen M."/>
            <person name="Pai G."/>
            <person name="Van Aken S."/>
            <person name="Umayam L."/>
            <person name="Tallon L.J."/>
            <person name="Gill J.E."/>
            <person name="Adams M.D."/>
            <person name="Carrera A.J."/>
            <person name="Creasy T.H."/>
            <person name="Goodman H.M."/>
            <person name="Somerville C.R."/>
            <person name="Copenhaver G.P."/>
            <person name="Preuss D."/>
            <person name="Nierman W.C."/>
            <person name="White O."/>
            <person name="Eisen J.A."/>
            <person name="Salzberg S.L."/>
            <person name="Fraser C.M."/>
            <person name="Venter J.C."/>
        </authorList>
    </citation>
    <scope>NUCLEOTIDE SEQUENCE [LARGE SCALE GENOMIC DNA]</scope>
    <source>
        <strain>cv. Columbia</strain>
    </source>
</reference>
<reference key="3">
    <citation type="journal article" date="2017" name="Plant J.">
        <title>Araport11: a complete reannotation of the Arabidopsis thaliana reference genome.</title>
        <authorList>
            <person name="Cheng C.Y."/>
            <person name="Krishnakumar V."/>
            <person name="Chan A.P."/>
            <person name="Thibaud-Nissen F."/>
            <person name="Schobel S."/>
            <person name="Town C.D."/>
        </authorList>
    </citation>
    <scope>GENOME REANNOTATION</scope>
    <source>
        <strain>cv. Columbia</strain>
    </source>
</reference>
<reference key="4">
    <citation type="journal article" date="2003" name="Science">
        <title>Empirical analysis of transcriptional activity in the Arabidopsis genome.</title>
        <authorList>
            <person name="Yamada K."/>
            <person name="Lim J."/>
            <person name="Dale J.M."/>
            <person name="Chen H."/>
            <person name="Shinn P."/>
            <person name="Palm C.J."/>
            <person name="Southwick A.M."/>
            <person name="Wu H.C."/>
            <person name="Kim C.J."/>
            <person name="Nguyen M."/>
            <person name="Pham P.K."/>
            <person name="Cheuk R.F."/>
            <person name="Karlin-Newmann G."/>
            <person name="Liu S.X."/>
            <person name="Lam B."/>
            <person name="Sakano H."/>
            <person name="Wu T."/>
            <person name="Yu G."/>
            <person name="Miranda M."/>
            <person name="Quach H.L."/>
            <person name="Tripp M."/>
            <person name="Chang C.H."/>
            <person name="Lee J.M."/>
            <person name="Toriumi M.J."/>
            <person name="Chan M.M."/>
            <person name="Tang C.C."/>
            <person name="Onodera C.S."/>
            <person name="Deng J.M."/>
            <person name="Akiyama K."/>
            <person name="Ansari Y."/>
            <person name="Arakawa T."/>
            <person name="Banh J."/>
            <person name="Banno F."/>
            <person name="Bowser L."/>
            <person name="Brooks S.Y."/>
            <person name="Carninci P."/>
            <person name="Chao Q."/>
            <person name="Choy N."/>
            <person name="Enju A."/>
            <person name="Goldsmith A.D."/>
            <person name="Gurjal M."/>
            <person name="Hansen N.F."/>
            <person name="Hayashizaki Y."/>
            <person name="Johnson-Hopson C."/>
            <person name="Hsuan V.W."/>
            <person name="Iida K."/>
            <person name="Karnes M."/>
            <person name="Khan S."/>
            <person name="Koesema E."/>
            <person name="Ishida J."/>
            <person name="Jiang P.X."/>
            <person name="Jones T."/>
            <person name="Kawai J."/>
            <person name="Kamiya A."/>
            <person name="Meyers C."/>
            <person name="Nakajima M."/>
            <person name="Narusaka M."/>
            <person name="Seki M."/>
            <person name="Sakurai T."/>
            <person name="Satou M."/>
            <person name="Tamse R."/>
            <person name="Vaysberg M."/>
            <person name="Wallender E.K."/>
            <person name="Wong C."/>
            <person name="Yamamura Y."/>
            <person name="Yuan S."/>
            <person name="Shinozaki K."/>
            <person name="Davis R.W."/>
            <person name="Theologis A."/>
            <person name="Ecker J.R."/>
        </authorList>
    </citation>
    <scope>NUCLEOTIDE SEQUENCE [LARGE SCALE MRNA]</scope>
    <source>
        <strain>cv. Columbia</strain>
    </source>
</reference>
<reference key="5">
    <citation type="journal article" date="1999" name="J. Biol. Chem.">
        <title>Chloroplast SecY is complexed to SecE and involved in the translocation of the 33-kDa but not the 23-kDa subunit of the oxygen-evolving complex.</title>
        <authorList>
            <person name="Schuenemann D."/>
            <person name="Amin P."/>
            <person name="Hartmann E."/>
            <person name="Hoffman N.E."/>
        </authorList>
    </citation>
    <scope>SUBCELLULAR LOCATION</scope>
    <scope>INTERACTION WITH SECE1</scope>
</reference>
<reference key="6">
    <citation type="journal article" date="2002" name="Biochem. J.">
        <title>The thylakoid membrane protein ALB3 associates with the cpSecY-translocase in Arabidopsis thaliana.</title>
        <authorList>
            <person name="Klostermann E."/>
            <person name="Droste Gen Helling I."/>
            <person name="Carde J.P."/>
            <person name="Schunemann D."/>
        </authorList>
    </citation>
    <scope>SUBCELLULAR LOCATION</scope>
    <scope>INTERACTION WITH ALB3</scope>
</reference>
<reference key="7">
    <citation type="journal article" date="2005" name="Appl. Microbiol. Biotechnol.">
        <title>The yeast split-ubiquitin system to study chloroplast membrane protein interactions.</title>
        <authorList>
            <person name="Pasch J.C."/>
            <person name="Nickelsen J."/>
            <person name="Schunemann D."/>
        </authorList>
    </citation>
    <scope>INTERACTION WITH ALB3 AND SECE1</scope>
</reference>
<reference key="8">
    <citation type="journal article" date="2011" name="Plant Physiol.">
        <title>Plastids contain a second sec translocase system with essential functions.</title>
        <authorList>
            <person name="Skalitzky C.A."/>
            <person name="Martin J.R."/>
            <person name="Harwood J.H."/>
            <person name="Beirne J.J."/>
            <person name="Adamczyk B.J."/>
            <person name="Heck G.R."/>
            <person name="Cline K."/>
            <person name="Fernandez D.E."/>
        </authorList>
    </citation>
    <scope>FUNCTION</scope>
    <scope>DISRUPTION PHENOTYPE</scope>
</reference>
<accession>Q38885</accession>
<accession>Q9SLG1</accession>
<proteinExistence type="evidence at protein level"/>
<organism>
    <name type="scientific">Arabidopsis thaliana</name>
    <name type="common">Mouse-ear cress</name>
    <dbReference type="NCBI Taxonomy" id="3702"/>
    <lineage>
        <taxon>Eukaryota</taxon>
        <taxon>Viridiplantae</taxon>
        <taxon>Streptophyta</taxon>
        <taxon>Embryophyta</taxon>
        <taxon>Tracheophyta</taxon>
        <taxon>Spermatophyta</taxon>
        <taxon>Magnoliopsida</taxon>
        <taxon>eudicotyledons</taxon>
        <taxon>Gunneridae</taxon>
        <taxon>Pentapetalae</taxon>
        <taxon>rosids</taxon>
        <taxon>malvids</taxon>
        <taxon>Brassicales</taxon>
        <taxon>Brassicaceae</taxon>
        <taxon>Camelineae</taxon>
        <taxon>Arabidopsis</taxon>
    </lineage>
</organism>
<name>SCY1_ARATH</name>
<dbReference type="EMBL" id="U37247">
    <property type="protein sequence ID" value="AAB60305.1"/>
    <property type="molecule type" value="mRNA"/>
</dbReference>
<dbReference type="EMBL" id="AC005724">
    <property type="protein sequence ID" value="AAD08940.1"/>
    <property type="molecule type" value="Genomic_DNA"/>
</dbReference>
<dbReference type="EMBL" id="CP002685">
    <property type="protein sequence ID" value="AEC06796.1"/>
    <property type="molecule type" value="Genomic_DNA"/>
</dbReference>
<dbReference type="EMBL" id="AF424550">
    <property type="protein sequence ID" value="AAL11544.1"/>
    <property type="molecule type" value="mRNA"/>
</dbReference>
<dbReference type="EMBL" id="AY058103">
    <property type="protein sequence ID" value="AAL24211.1"/>
    <property type="molecule type" value="mRNA"/>
</dbReference>
<dbReference type="EMBL" id="AY065093">
    <property type="protein sequence ID" value="AAL38269.1"/>
    <property type="molecule type" value="mRNA"/>
</dbReference>
<dbReference type="EMBL" id="BT002632">
    <property type="protein sequence ID" value="AAO11548.1"/>
    <property type="molecule type" value="mRNA"/>
</dbReference>
<dbReference type="PIR" id="A57189">
    <property type="entry name" value="A57189"/>
</dbReference>
<dbReference type="PIR" id="F84567">
    <property type="entry name" value="F84567"/>
</dbReference>
<dbReference type="RefSeq" id="NP_179461.1">
    <property type="nucleotide sequence ID" value="NM_127427.3"/>
</dbReference>
<dbReference type="SMR" id="Q38885"/>
<dbReference type="BioGRID" id="1743">
    <property type="interactions" value="3"/>
</dbReference>
<dbReference type="FunCoup" id="Q38885">
    <property type="interactions" value="989"/>
</dbReference>
<dbReference type="IntAct" id="Q38885">
    <property type="interactions" value="4"/>
</dbReference>
<dbReference type="STRING" id="3702.Q38885"/>
<dbReference type="TCDB" id="3.A.5.4.2">
    <property type="family name" value="the general secretory pathway (sec) family"/>
</dbReference>
<dbReference type="PaxDb" id="3702-AT2G18710.1"/>
<dbReference type="ProteomicsDB" id="232716"/>
<dbReference type="EnsemblPlants" id="AT2G18710.1">
    <property type="protein sequence ID" value="AT2G18710.1"/>
    <property type="gene ID" value="AT2G18710"/>
</dbReference>
<dbReference type="GeneID" id="816386"/>
<dbReference type="Gramene" id="AT2G18710.1">
    <property type="protein sequence ID" value="AT2G18710.1"/>
    <property type="gene ID" value="AT2G18710"/>
</dbReference>
<dbReference type="KEGG" id="ath:AT2G18710"/>
<dbReference type="Araport" id="AT2G18710"/>
<dbReference type="TAIR" id="AT2G18710">
    <property type="gene designation" value="SCY1"/>
</dbReference>
<dbReference type="eggNOG" id="ENOG502QSNV">
    <property type="taxonomic scope" value="Eukaryota"/>
</dbReference>
<dbReference type="HOGENOM" id="CLU_030313_0_0_1"/>
<dbReference type="InParanoid" id="Q38885"/>
<dbReference type="OMA" id="FAMWLGE"/>
<dbReference type="OrthoDB" id="361383at2759"/>
<dbReference type="PhylomeDB" id="Q38885"/>
<dbReference type="PRO" id="PR:Q38885"/>
<dbReference type="Proteomes" id="UP000006548">
    <property type="component" value="Chromosome 2"/>
</dbReference>
<dbReference type="ExpressionAtlas" id="Q38885">
    <property type="expression patterns" value="baseline and differential"/>
</dbReference>
<dbReference type="GO" id="GO:0009507">
    <property type="term" value="C:chloroplast"/>
    <property type="evidence" value="ECO:0007005"/>
    <property type="project" value="TAIR"/>
</dbReference>
<dbReference type="GO" id="GO:0009535">
    <property type="term" value="C:chloroplast thylakoid membrane"/>
    <property type="evidence" value="ECO:0000314"/>
    <property type="project" value="TAIR"/>
</dbReference>
<dbReference type="GO" id="GO:0015031">
    <property type="term" value="P:protein transport"/>
    <property type="evidence" value="ECO:0007669"/>
    <property type="project" value="UniProtKB-KW"/>
</dbReference>
<dbReference type="GO" id="GO:0010027">
    <property type="term" value="P:thylakoid membrane organization"/>
    <property type="evidence" value="ECO:0000250"/>
    <property type="project" value="TAIR"/>
</dbReference>
<dbReference type="FunFam" id="1.10.3370.10:FF:000003">
    <property type="entry name" value="Preprotein translocase subunit SECY, chloroplastic"/>
    <property type="match status" value="1"/>
</dbReference>
<dbReference type="Gene3D" id="1.10.3370.10">
    <property type="entry name" value="SecY subunit domain"/>
    <property type="match status" value="1"/>
</dbReference>
<dbReference type="HAMAP" id="MF_01465">
    <property type="entry name" value="SecY"/>
    <property type="match status" value="1"/>
</dbReference>
<dbReference type="InterPro" id="IPR026593">
    <property type="entry name" value="SecY"/>
</dbReference>
<dbReference type="InterPro" id="IPR002208">
    <property type="entry name" value="SecY/SEC61-alpha"/>
</dbReference>
<dbReference type="InterPro" id="IPR030659">
    <property type="entry name" value="SecY_CS"/>
</dbReference>
<dbReference type="InterPro" id="IPR023201">
    <property type="entry name" value="SecY_dom_sf"/>
</dbReference>
<dbReference type="NCBIfam" id="TIGR00967">
    <property type="entry name" value="3a0501s007"/>
    <property type="match status" value="1"/>
</dbReference>
<dbReference type="PANTHER" id="PTHR10906">
    <property type="entry name" value="SECY/SEC61-ALPHA FAMILY MEMBER"/>
    <property type="match status" value="1"/>
</dbReference>
<dbReference type="Pfam" id="PF00344">
    <property type="entry name" value="SecY"/>
    <property type="match status" value="1"/>
</dbReference>
<dbReference type="PRINTS" id="PR00303">
    <property type="entry name" value="SECYTRNLCASE"/>
</dbReference>
<dbReference type="SUPFAM" id="SSF103491">
    <property type="entry name" value="Preprotein translocase SecY subunit"/>
    <property type="match status" value="1"/>
</dbReference>
<dbReference type="PROSITE" id="PS00755">
    <property type="entry name" value="SECY_1"/>
    <property type="match status" value="1"/>
</dbReference>
<dbReference type="PROSITE" id="PS00756">
    <property type="entry name" value="SECY_2"/>
    <property type="match status" value="1"/>
</dbReference>
<keyword id="KW-0150">Chloroplast</keyword>
<keyword id="KW-0472">Membrane</keyword>
<keyword id="KW-0934">Plastid</keyword>
<keyword id="KW-0653">Protein transport</keyword>
<keyword id="KW-1185">Reference proteome</keyword>
<keyword id="KW-0793">Thylakoid</keyword>
<keyword id="KW-0809">Transit peptide</keyword>
<keyword id="KW-0811">Translocation</keyword>
<keyword id="KW-0812">Transmembrane</keyword>
<keyword id="KW-1133">Transmembrane helix</keyword>
<keyword id="KW-0813">Transport</keyword>
<sequence>MITVSEVSSYSSSSSNFASLSRLNHKSSSRLRSSSLYKGSFFSVSTKTRRNTCKAKSWNLGLVINSRSSEASVFDPLGINPDETSGLSSIWESFVSLLSPSFESSSGNRRDKPSSGRGVAAAIEDSSIDFGDFFKGPLPGKFLKLLGFLALSRLGIYIPLGGVNREAFVGNLDQNSILSTLDTFSGGGIGRLGICSLGIVPFINAQIVFQLLAQVYPKLQDLQKKEGEAGRKKILQYTRYASVGFAIVQAIGQVFYLRPYVNDFSTEWVVSSVTLLTLGSVLTTYIGERISDLKLGNGTSLLIFTSIISYLPASFGRTTAEALQEGNYTGLGTIVVSFLLLVLGIVYVQEAERKIPLNYASRYTSKAGGLQKSAYLPFKVNSAGVMPIIFSTSSLALPATLARFTGISALKNVAFALTPGGSFYLPTNILLIAFFNYYYTFLQLDPDDVSEQLKRQGASIPLVRPGKSTALFIKTVLGRISVLGSAFLAVLAAGPAVVEQITHLTAFRGFAGTSVLILVGCATDTARKVQAEIISQKYKNIEFYELDKYDP</sequence>
<gene>
    <name type="primary">SCY1</name>
    <name type="synonym">SECY</name>
    <name type="ordered locus">At2g18710</name>
    <name type="ORF">MSF3.9</name>
</gene>
<feature type="transit peptide" description="Chloroplast" evidence="2">
    <location>
        <begin position="1"/>
        <end position="67"/>
    </location>
</feature>
<feature type="chain" id="PRO_0000031995" description="Preprotein translocase subunit SCY1, chloroplastic">
    <location>
        <begin position="68"/>
        <end position="551"/>
    </location>
</feature>
<feature type="transmembrane region" description="Helical" evidence="2">
    <location>
        <begin position="142"/>
        <end position="162"/>
    </location>
</feature>
<feature type="transmembrane region" description="Helical" evidence="2">
    <location>
        <begin position="192"/>
        <end position="212"/>
    </location>
</feature>
<feature type="transmembrane region" description="Helical" evidence="2">
    <location>
        <begin position="241"/>
        <end position="261"/>
    </location>
</feature>
<feature type="transmembrane region" description="Helical" evidence="2">
    <location>
        <begin position="268"/>
        <end position="288"/>
    </location>
</feature>
<feature type="transmembrane region" description="Helical" evidence="2">
    <location>
        <begin position="295"/>
        <end position="315"/>
    </location>
</feature>
<feature type="transmembrane region" description="Helical" evidence="2">
    <location>
        <begin position="328"/>
        <end position="348"/>
    </location>
</feature>
<feature type="transmembrane region" description="Helical" evidence="2">
    <location>
        <begin position="382"/>
        <end position="402"/>
    </location>
</feature>
<feature type="transmembrane region" description="Helical" evidence="2">
    <location>
        <begin position="415"/>
        <end position="435"/>
    </location>
</feature>
<feature type="transmembrane region" description="Helical" evidence="2">
    <location>
        <begin position="482"/>
        <end position="502"/>
    </location>
</feature>
<feature type="transmembrane region" description="Helical" evidence="2">
    <location>
        <begin position="503"/>
        <end position="523"/>
    </location>
</feature>
<feature type="sequence conflict" description="In Ref. 1; AAB60305." evidence="7" ref="1">
    <original>V</original>
    <variation>L</variation>
    <location>
        <position position="281"/>
    </location>
</feature>
<comment type="function">
    <text evidence="1 6">Involved in protein export. Probably interacts with other proteins to allow the translocation of proteins across the chloroplast thylakoid membranes. Required for normal greening during embryogenesis. Central subunit of the protein translocation channel SecYE. Consists of two halves formed by TMs 1-5 and 6-10. These two domains form a lateral gate at the front which open onto the bilayer between TMs 2 and 7, and are clamped together by SecE at the back. The channel is closed by both a pore ring composed of hydrophobic SecY resides and a short helix (helix 2A) on the extracellular side of the membrane which forms a plug (By similarity).</text>
</comment>
<comment type="subunit">
    <text evidence="3 4 5">Part of the Sec protein translocation apparatus. Interacts with SECE1, ALB3 and probably with SECA1.</text>
</comment>
<comment type="interaction">
    <interactant intactId="EBI-1806802">
        <id>Q38885</id>
    </interactant>
    <interactant intactId="EBI-1806831">
        <id>Q8LBP4</id>
        <label>ALB3</label>
    </interactant>
    <organismsDiffer>false</organismsDiffer>
    <experiments>8</experiments>
</comment>
<comment type="interaction">
    <interactant intactId="EBI-1806802">
        <id>Q38885</id>
    </interactant>
    <interactant intactId="EBI-1806811">
        <id>O23342</id>
        <label>SECE1</label>
    </interactant>
    <organismsDiffer>false</organismsDiffer>
    <experiments>3</experiments>
</comment>
<comment type="subcellular location">
    <subcellularLocation>
        <location evidence="3 4">Plastid</location>
        <location evidence="3 4">Chloroplast thylakoid membrane</location>
        <topology evidence="3 4">Multi-pass membrane protein</topology>
    </subcellularLocation>
</comment>
<comment type="disruption phenotype">
    <text evidence="6">Seedling lethal. Albino seedlings with yellow and translucent (glassy) lateral organs when grown heterotrophically.</text>
</comment>
<comment type="miscellaneous">
    <text>Cannot substitute for SCY2.</text>
</comment>
<comment type="similarity">
    <text evidence="7">Belongs to the SecY/SEC61-alpha family.</text>
</comment>
<protein>
    <recommendedName>
        <fullName>Preprotein translocase subunit SCY1, chloroplastic</fullName>
    </recommendedName>
    <alternativeName>
        <fullName>CpSecY</fullName>
    </alternativeName>
</protein>